<evidence type="ECO:0000255" key="1">
    <source>
        <dbReference type="HAMAP-Rule" id="MF_00164"/>
    </source>
</evidence>
<evidence type="ECO:0000305" key="2"/>
<accession>Q8DJI6</accession>
<comment type="function">
    <text evidence="1">Catalyzes the first step in hexosamine metabolism, converting fructose-6P into glucosamine-6P using glutamine as a nitrogen source.</text>
</comment>
<comment type="catalytic activity">
    <reaction evidence="1">
        <text>D-fructose 6-phosphate + L-glutamine = D-glucosamine 6-phosphate + L-glutamate</text>
        <dbReference type="Rhea" id="RHEA:13237"/>
        <dbReference type="ChEBI" id="CHEBI:29985"/>
        <dbReference type="ChEBI" id="CHEBI:58359"/>
        <dbReference type="ChEBI" id="CHEBI:58725"/>
        <dbReference type="ChEBI" id="CHEBI:61527"/>
        <dbReference type="EC" id="2.6.1.16"/>
    </reaction>
</comment>
<comment type="subunit">
    <text evidence="1">Homodimer.</text>
</comment>
<comment type="subcellular location">
    <subcellularLocation>
        <location evidence="1">Cytoplasm</location>
    </subcellularLocation>
</comment>
<comment type="sequence caution" evidence="2">
    <conflict type="erroneous initiation">
        <sequence resource="EMBL-CDS" id="BAC08789"/>
    </conflict>
</comment>
<organism>
    <name type="scientific">Thermosynechococcus vestitus (strain NIES-2133 / IAM M-273 / BP-1)</name>
    <dbReference type="NCBI Taxonomy" id="197221"/>
    <lineage>
        <taxon>Bacteria</taxon>
        <taxon>Bacillati</taxon>
        <taxon>Cyanobacteriota</taxon>
        <taxon>Cyanophyceae</taxon>
        <taxon>Acaryochloridales</taxon>
        <taxon>Thermosynechococcaceae</taxon>
        <taxon>Thermosynechococcus</taxon>
    </lineage>
</organism>
<proteinExistence type="inferred from homology"/>
<gene>
    <name evidence="1" type="primary">glmS</name>
    <name type="ordered locus">tll1237</name>
</gene>
<reference key="1">
    <citation type="journal article" date="2002" name="DNA Res.">
        <title>Complete genome structure of the thermophilic cyanobacterium Thermosynechococcus elongatus BP-1.</title>
        <authorList>
            <person name="Nakamura Y."/>
            <person name="Kaneko T."/>
            <person name="Sato S."/>
            <person name="Ikeuchi M."/>
            <person name="Katoh H."/>
            <person name="Sasamoto S."/>
            <person name="Watanabe A."/>
            <person name="Iriguchi M."/>
            <person name="Kawashima K."/>
            <person name="Kimura T."/>
            <person name="Kishida Y."/>
            <person name="Kiyokawa C."/>
            <person name="Kohara M."/>
            <person name="Matsumoto M."/>
            <person name="Matsuno A."/>
            <person name="Nakazaki N."/>
            <person name="Shimpo S."/>
            <person name="Sugimoto M."/>
            <person name="Takeuchi C."/>
            <person name="Yamada M."/>
            <person name="Tabata S."/>
        </authorList>
    </citation>
    <scope>NUCLEOTIDE SEQUENCE [LARGE SCALE GENOMIC DNA]</scope>
    <source>
        <strain>NIES-2133 / IAM M-273 / BP-1</strain>
    </source>
</reference>
<name>GLMS_THEVB</name>
<keyword id="KW-0032">Aminotransferase</keyword>
<keyword id="KW-0963">Cytoplasm</keyword>
<keyword id="KW-0315">Glutamine amidotransferase</keyword>
<keyword id="KW-1185">Reference proteome</keyword>
<keyword id="KW-0677">Repeat</keyword>
<keyword id="KW-0808">Transferase</keyword>
<sequence>MCGIVGYIGPQGAAQILLQGLQKLEYRGYDSAGIATLNEGELLCVRAKGKLQNLVEKVEQLDIVAHVGIGHTRWATHGKPEEYNAHPHRDSRDRLAVVQNGIIENYRELRDQLQARGHIFRSETDTEVIPHLIAELLPETPTANGLLEAVRQAVHQLEGAFAIAVICADYPDELIVARQQAPLVIGFGQGEFFCASDTPAIIPYTRAVLPLENGELARLTPTGVEVYDFEGHRLRKTPRTLNWNPVMVEKQGFKHYMLKEIYEQPGVVRACLENYLRADWEVASPFSPVQLNLPPSLLDNLQHIQIVACGTSWHAGLVGKYLLEQVAQIPTSVQYASEFRYAPPPLLPHTLTIGVTQSGETADTLAALEMELKRRQGLDGALQPRLLGITNRPESSLGHLVPHIIDTRAGIEIGVAATKTFVAQLMAFYLLTLELSWQRQSCDRSRLAELVTGLRQLPAQMEQILESQERYIEALSHDFWETQDFIFLGRGINFPIALEGALKLKEISYIHAEGYPAGEMKHGPIALLDAKVPVVTIAMPGSVFEKVLSNAQEARARDARLIGVTPLDEAEAQHTFDNLLPVPEVDELLSPILTVIPLQLLAYHIAARRGLDVDQPRNLAKSVTVE</sequence>
<feature type="initiator methionine" description="Removed" evidence="1">
    <location>
        <position position="1"/>
    </location>
</feature>
<feature type="chain" id="PRO_0000135398" description="Glutamine--fructose-6-phosphate aminotransferase [isomerizing]">
    <location>
        <begin position="2"/>
        <end position="626"/>
    </location>
</feature>
<feature type="domain" description="Glutamine amidotransferase type-2" evidence="1">
    <location>
        <begin position="2"/>
        <end position="222"/>
    </location>
</feature>
<feature type="domain" description="SIS 1" evidence="1">
    <location>
        <begin position="293"/>
        <end position="441"/>
    </location>
</feature>
<feature type="domain" description="SIS 2" evidence="1">
    <location>
        <begin position="471"/>
        <end position="616"/>
    </location>
</feature>
<feature type="active site" description="Nucleophile; for GATase activity" evidence="1">
    <location>
        <position position="2"/>
    </location>
</feature>
<feature type="active site" description="For Fru-6P isomerization activity" evidence="1">
    <location>
        <position position="621"/>
    </location>
</feature>
<dbReference type="EC" id="2.6.1.16" evidence="1"/>
<dbReference type="EMBL" id="BA000039">
    <property type="protein sequence ID" value="BAC08789.1"/>
    <property type="status" value="ALT_INIT"/>
    <property type="molecule type" value="Genomic_DNA"/>
</dbReference>
<dbReference type="RefSeq" id="NP_682027.1">
    <property type="nucleotide sequence ID" value="NC_004113.1"/>
</dbReference>
<dbReference type="RefSeq" id="WP_164921151.1">
    <property type="nucleotide sequence ID" value="NC_004113.1"/>
</dbReference>
<dbReference type="SMR" id="Q8DJI6"/>
<dbReference type="STRING" id="197221.gene:10747833"/>
<dbReference type="EnsemblBacteria" id="BAC08789">
    <property type="protein sequence ID" value="BAC08789"/>
    <property type="gene ID" value="BAC08789"/>
</dbReference>
<dbReference type="KEGG" id="tel:tll1237"/>
<dbReference type="PATRIC" id="fig|197221.4.peg.1301"/>
<dbReference type="eggNOG" id="COG0449">
    <property type="taxonomic scope" value="Bacteria"/>
</dbReference>
<dbReference type="Proteomes" id="UP000000440">
    <property type="component" value="Chromosome"/>
</dbReference>
<dbReference type="GO" id="GO:0005829">
    <property type="term" value="C:cytosol"/>
    <property type="evidence" value="ECO:0007669"/>
    <property type="project" value="TreeGrafter"/>
</dbReference>
<dbReference type="GO" id="GO:0097367">
    <property type="term" value="F:carbohydrate derivative binding"/>
    <property type="evidence" value="ECO:0007669"/>
    <property type="project" value="InterPro"/>
</dbReference>
<dbReference type="GO" id="GO:0004360">
    <property type="term" value="F:glutamine-fructose-6-phosphate transaminase (isomerizing) activity"/>
    <property type="evidence" value="ECO:0007669"/>
    <property type="project" value="UniProtKB-UniRule"/>
</dbReference>
<dbReference type="GO" id="GO:0005975">
    <property type="term" value="P:carbohydrate metabolic process"/>
    <property type="evidence" value="ECO:0007669"/>
    <property type="project" value="UniProtKB-UniRule"/>
</dbReference>
<dbReference type="GO" id="GO:0006002">
    <property type="term" value="P:fructose 6-phosphate metabolic process"/>
    <property type="evidence" value="ECO:0007669"/>
    <property type="project" value="TreeGrafter"/>
</dbReference>
<dbReference type="GO" id="GO:0006487">
    <property type="term" value="P:protein N-linked glycosylation"/>
    <property type="evidence" value="ECO:0007669"/>
    <property type="project" value="TreeGrafter"/>
</dbReference>
<dbReference type="GO" id="GO:0006047">
    <property type="term" value="P:UDP-N-acetylglucosamine metabolic process"/>
    <property type="evidence" value="ECO:0007669"/>
    <property type="project" value="TreeGrafter"/>
</dbReference>
<dbReference type="CDD" id="cd00714">
    <property type="entry name" value="GFAT"/>
    <property type="match status" value="1"/>
</dbReference>
<dbReference type="CDD" id="cd05008">
    <property type="entry name" value="SIS_GlmS_GlmD_1"/>
    <property type="match status" value="1"/>
</dbReference>
<dbReference type="CDD" id="cd05009">
    <property type="entry name" value="SIS_GlmS_GlmD_2"/>
    <property type="match status" value="1"/>
</dbReference>
<dbReference type="FunFam" id="3.40.50.10490:FF:000001">
    <property type="entry name" value="Glutamine--fructose-6-phosphate aminotransferase [isomerizing]"/>
    <property type="match status" value="1"/>
</dbReference>
<dbReference type="FunFam" id="3.40.50.10490:FF:000002">
    <property type="entry name" value="Glutamine--fructose-6-phosphate aminotransferase [isomerizing]"/>
    <property type="match status" value="1"/>
</dbReference>
<dbReference type="FunFam" id="3.60.20.10:FF:000006">
    <property type="entry name" value="Glutamine--fructose-6-phosphate aminotransferase [isomerizing]"/>
    <property type="match status" value="1"/>
</dbReference>
<dbReference type="Gene3D" id="3.40.50.10490">
    <property type="entry name" value="Glucose-6-phosphate isomerase like protein, domain 1"/>
    <property type="match status" value="2"/>
</dbReference>
<dbReference type="Gene3D" id="3.60.20.10">
    <property type="entry name" value="Glutamine Phosphoribosylpyrophosphate, subunit 1, domain 1"/>
    <property type="match status" value="1"/>
</dbReference>
<dbReference type="HAMAP" id="MF_00164">
    <property type="entry name" value="GlmS"/>
    <property type="match status" value="1"/>
</dbReference>
<dbReference type="InterPro" id="IPR017932">
    <property type="entry name" value="GATase_2_dom"/>
</dbReference>
<dbReference type="InterPro" id="IPR005855">
    <property type="entry name" value="GFAT"/>
</dbReference>
<dbReference type="InterPro" id="IPR047084">
    <property type="entry name" value="GFAT_N"/>
</dbReference>
<dbReference type="InterPro" id="IPR035466">
    <property type="entry name" value="GlmS/AgaS_SIS"/>
</dbReference>
<dbReference type="InterPro" id="IPR035490">
    <property type="entry name" value="GlmS/FrlB_SIS"/>
</dbReference>
<dbReference type="InterPro" id="IPR029055">
    <property type="entry name" value="Ntn_hydrolases_N"/>
</dbReference>
<dbReference type="InterPro" id="IPR001347">
    <property type="entry name" value="SIS_dom"/>
</dbReference>
<dbReference type="InterPro" id="IPR046348">
    <property type="entry name" value="SIS_dom_sf"/>
</dbReference>
<dbReference type="NCBIfam" id="TIGR01135">
    <property type="entry name" value="glmS"/>
    <property type="match status" value="1"/>
</dbReference>
<dbReference type="NCBIfam" id="NF001484">
    <property type="entry name" value="PRK00331.1"/>
    <property type="match status" value="1"/>
</dbReference>
<dbReference type="PANTHER" id="PTHR10937">
    <property type="entry name" value="GLUCOSAMINE--FRUCTOSE-6-PHOSPHATE AMINOTRANSFERASE, ISOMERIZING"/>
    <property type="match status" value="1"/>
</dbReference>
<dbReference type="PANTHER" id="PTHR10937:SF0">
    <property type="entry name" value="GLUTAMINE--FRUCTOSE-6-PHOSPHATE TRANSAMINASE (ISOMERIZING)"/>
    <property type="match status" value="1"/>
</dbReference>
<dbReference type="Pfam" id="PF13522">
    <property type="entry name" value="GATase_6"/>
    <property type="match status" value="1"/>
</dbReference>
<dbReference type="Pfam" id="PF01380">
    <property type="entry name" value="SIS"/>
    <property type="match status" value="2"/>
</dbReference>
<dbReference type="SUPFAM" id="SSF56235">
    <property type="entry name" value="N-terminal nucleophile aminohydrolases (Ntn hydrolases)"/>
    <property type="match status" value="1"/>
</dbReference>
<dbReference type="SUPFAM" id="SSF53697">
    <property type="entry name" value="SIS domain"/>
    <property type="match status" value="1"/>
</dbReference>
<dbReference type="PROSITE" id="PS51278">
    <property type="entry name" value="GATASE_TYPE_2"/>
    <property type="match status" value="1"/>
</dbReference>
<dbReference type="PROSITE" id="PS51464">
    <property type="entry name" value="SIS"/>
    <property type="match status" value="2"/>
</dbReference>
<protein>
    <recommendedName>
        <fullName evidence="1">Glutamine--fructose-6-phosphate aminotransferase [isomerizing]</fullName>
        <ecNumber evidence="1">2.6.1.16</ecNumber>
    </recommendedName>
    <alternativeName>
        <fullName evidence="1">D-fructose-6-phosphate amidotransferase</fullName>
    </alternativeName>
    <alternativeName>
        <fullName evidence="1">GFAT</fullName>
    </alternativeName>
    <alternativeName>
        <fullName evidence="1">Glucosamine-6-phosphate synthase</fullName>
    </alternativeName>
    <alternativeName>
        <fullName evidence="1">Hexosephosphate aminotransferase</fullName>
    </alternativeName>
    <alternativeName>
        <fullName evidence="1">L-glutamine--D-fructose-6-phosphate amidotransferase</fullName>
    </alternativeName>
</protein>